<dbReference type="EMBL" id="CP000716">
    <property type="protein sequence ID" value="ABR31220.1"/>
    <property type="molecule type" value="Genomic_DNA"/>
</dbReference>
<dbReference type="RefSeq" id="WP_012057579.1">
    <property type="nucleotide sequence ID" value="NC_009616.1"/>
</dbReference>
<dbReference type="SMR" id="A6LMR9"/>
<dbReference type="STRING" id="391009.Tmel_1373"/>
<dbReference type="KEGG" id="tme:Tmel_1373"/>
<dbReference type="eggNOG" id="COG1660">
    <property type="taxonomic scope" value="Bacteria"/>
</dbReference>
<dbReference type="HOGENOM" id="CLU_059558_0_0_0"/>
<dbReference type="OrthoDB" id="9784461at2"/>
<dbReference type="Proteomes" id="UP000001110">
    <property type="component" value="Chromosome"/>
</dbReference>
<dbReference type="GO" id="GO:0005524">
    <property type="term" value="F:ATP binding"/>
    <property type="evidence" value="ECO:0007669"/>
    <property type="project" value="UniProtKB-UniRule"/>
</dbReference>
<dbReference type="GO" id="GO:0005525">
    <property type="term" value="F:GTP binding"/>
    <property type="evidence" value="ECO:0007669"/>
    <property type="project" value="UniProtKB-UniRule"/>
</dbReference>
<dbReference type="Gene3D" id="3.40.50.300">
    <property type="entry name" value="P-loop containing nucleotide triphosphate hydrolases"/>
    <property type="match status" value="1"/>
</dbReference>
<dbReference type="HAMAP" id="MF_00636">
    <property type="entry name" value="RapZ_like"/>
    <property type="match status" value="1"/>
</dbReference>
<dbReference type="InterPro" id="IPR027417">
    <property type="entry name" value="P-loop_NTPase"/>
</dbReference>
<dbReference type="InterPro" id="IPR005337">
    <property type="entry name" value="RapZ-like"/>
</dbReference>
<dbReference type="InterPro" id="IPR053930">
    <property type="entry name" value="RapZ-like_N"/>
</dbReference>
<dbReference type="InterPro" id="IPR053931">
    <property type="entry name" value="RapZ_C"/>
</dbReference>
<dbReference type="NCBIfam" id="NF003828">
    <property type="entry name" value="PRK05416.1"/>
    <property type="match status" value="1"/>
</dbReference>
<dbReference type="PANTHER" id="PTHR30448">
    <property type="entry name" value="RNASE ADAPTER PROTEIN RAPZ"/>
    <property type="match status" value="1"/>
</dbReference>
<dbReference type="PANTHER" id="PTHR30448:SF0">
    <property type="entry name" value="RNASE ADAPTER PROTEIN RAPZ"/>
    <property type="match status" value="1"/>
</dbReference>
<dbReference type="Pfam" id="PF22740">
    <property type="entry name" value="PapZ_C"/>
    <property type="match status" value="1"/>
</dbReference>
<dbReference type="Pfam" id="PF03668">
    <property type="entry name" value="RapZ-like_N"/>
    <property type="match status" value="1"/>
</dbReference>
<dbReference type="PIRSF" id="PIRSF005052">
    <property type="entry name" value="P-loopkin"/>
    <property type="match status" value="1"/>
</dbReference>
<dbReference type="SUPFAM" id="SSF52540">
    <property type="entry name" value="P-loop containing nucleoside triphosphate hydrolases"/>
    <property type="match status" value="1"/>
</dbReference>
<evidence type="ECO:0000255" key="1">
    <source>
        <dbReference type="HAMAP-Rule" id="MF_00636"/>
    </source>
</evidence>
<sequence length="278" mass="31768">MLKNLVVLTGLSGAGKSTALGLLEDMGFYCIDNLPVKIIDQILPIISINIESLALVIDSRSGDIDDIVSVIENMKAKYPVKVIFLNAKDEVLINRFAHTRRNHPLLKEETSLEKAILEERKLFIKILELSDIVVDTSNLNPHQLRERLVGILTSVKKKFRLRILSFGFKYGVPLDVDFIFDVRFFPNPFYVVGLRQKSGKDKEVKNFLYNTQGVKEFLDLIKKVVDFAIQRYENEGRTELSVGIGCTGGQHRSVFFAEELFKFYNENCKVILEHRDVK</sequence>
<comment type="function">
    <text evidence="1">Displays ATPase and GTPase activities.</text>
</comment>
<comment type="similarity">
    <text evidence="1">Belongs to the RapZ-like family.</text>
</comment>
<proteinExistence type="inferred from homology"/>
<name>Y1373_THEM4</name>
<protein>
    <recommendedName>
        <fullName evidence="1">Nucleotide-binding protein Tmel_1373</fullName>
    </recommendedName>
</protein>
<keyword id="KW-0067">ATP-binding</keyword>
<keyword id="KW-0342">GTP-binding</keyword>
<keyword id="KW-0547">Nucleotide-binding</keyword>
<feature type="chain" id="PRO_0000383301" description="Nucleotide-binding protein Tmel_1373">
    <location>
        <begin position="1"/>
        <end position="278"/>
    </location>
</feature>
<feature type="binding site" evidence="1">
    <location>
        <begin position="10"/>
        <end position="17"/>
    </location>
    <ligand>
        <name>ATP</name>
        <dbReference type="ChEBI" id="CHEBI:30616"/>
    </ligand>
</feature>
<feature type="binding site" evidence="1">
    <location>
        <begin position="58"/>
        <end position="61"/>
    </location>
    <ligand>
        <name>GTP</name>
        <dbReference type="ChEBI" id="CHEBI:37565"/>
    </ligand>
</feature>
<accession>A6LMR9</accession>
<organism>
    <name type="scientific">Thermosipho melanesiensis (strain DSM 12029 / CIP 104789 / BI429)</name>
    <dbReference type="NCBI Taxonomy" id="391009"/>
    <lineage>
        <taxon>Bacteria</taxon>
        <taxon>Thermotogati</taxon>
        <taxon>Thermotogota</taxon>
        <taxon>Thermotogae</taxon>
        <taxon>Thermotogales</taxon>
        <taxon>Fervidobacteriaceae</taxon>
        <taxon>Thermosipho</taxon>
    </lineage>
</organism>
<gene>
    <name type="ordered locus">Tmel_1373</name>
</gene>
<reference key="1">
    <citation type="submission" date="2007-05" db="EMBL/GenBank/DDBJ databases">
        <title>Complete sequence of Thermosipho melanesiensis BI429.</title>
        <authorList>
            <consortium name="US DOE Joint Genome Institute"/>
            <person name="Copeland A."/>
            <person name="Lucas S."/>
            <person name="Lapidus A."/>
            <person name="Barry K."/>
            <person name="Glavina del Rio T."/>
            <person name="Dalin E."/>
            <person name="Tice H."/>
            <person name="Pitluck S."/>
            <person name="Chertkov O."/>
            <person name="Brettin T."/>
            <person name="Bruce D."/>
            <person name="Detter J.C."/>
            <person name="Han C."/>
            <person name="Schmutz J."/>
            <person name="Larimer F."/>
            <person name="Land M."/>
            <person name="Hauser L."/>
            <person name="Kyrpides N."/>
            <person name="Mikhailova N."/>
            <person name="Nelson K."/>
            <person name="Gogarten J.P."/>
            <person name="Noll K."/>
            <person name="Richardson P."/>
        </authorList>
    </citation>
    <scope>NUCLEOTIDE SEQUENCE [LARGE SCALE GENOMIC DNA]</scope>
    <source>
        <strain>DSM 12029 / CIP 104789 / BI429</strain>
    </source>
</reference>